<protein>
    <recommendedName>
        <fullName evidence="1">Ubiquinone/menaquinone biosynthesis C-methyltransferase UbiE</fullName>
        <ecNumber evidence="1">2.1.1.163</ecNumber>
        <ecNumber evidence="1">2.1.1.201</ecNumber>
    </recommendedName>
    <alternativeName>
        <fullName evidence="1">2-methoxy-6-polyprenyl-1,4-benzoquinol methylase</fullName>
    </alternativeName>
    <alternativeName>
        <fullName evidence="1">Demethylmenaquinone methyltransferase</fullName>
    </alternativeName>
</protein>
<keyword id="KW-0474">Menaquinone biosynthesis</keyword>
<keyword id="KW-0489">Methyltransferase</keyword>
<keyword id="KW-0949">S-adenosyl-L-methionine</keyword>
<keyword id="KW-0808">Transferase</keyword>
<keyword id="KW-0831">Ubiquinone biosynthesis</keyword>
<gene>
    <name evidence="1" type="primary">ubiE</name>
    <name type="ordered locus">SNSL254_A4250</name>
</gene>
<comment type="function">
    <text evidence="1">Methyltransferase required for the conversion of demethylmenaquinol (DMKH2) to menaquinol (MKH2) and the conversion of 2-polyprenyl-6-methoxy-1,4-benzoquinol (DDMQH2) to 2-polyprenyl-3-methyl-6-methoxy-1,4-benzoquinol (DMQH2).</text>
</comment>
<comment type="catalytic activity">
    <reaction evidence="1">
        <text>a 2-demethylmenaquinol + S-adenosyl-L-methionine = a menaquinol + S-adenosyl-L-homocysteine + H(+)</text>
        <dbReference type="Rhea" id="RHEA:42640"/>
        <dbReference type="Rhea" id="RHEA-COMP:9539"/>
        <dbReference type="Rhea" id="RHEA-COMP:9563"/>
        <dbReference type="ChEBI" id="CHEBI:15378"/>
        <dbReference type="ChEBI" id="CHEBI:18151"/>
        <dbReference type="ChEBI" id="CHEBI:55437"/>
        <dbReference type="ChEBI" id="CHEBI:57856"/>
        <dbReference type="ChEBI" id="CHEBI:59789"/>
        <dbReference type="EC" id="2.1.1.163"/>
    </reaction>
</comment>
<comment type="catalytic activity">
    <reaction evidence="1">
        <text>a 2-methoxy-6-(all-trans-polyprenyl)benzene-1,4-diol + S-adenosyl-L-methionine = a 5-methoxy-2-methyl-3-(all-trans-polyprenyl)benzene-1,4-diol + S-adenosyl-L-homocysteine + H(+)</text>
        <dbReference type="Rhea" id="RHEA:28286"/>
        <dbReference type="Rhea" id="RHEA-COMP:10858"/>
        <dbReference type="Rhea" id="RHEA-COMP:10859"/>
        <dbReference type="ChEBI" id="CHEBI:15378"/>
        <dbReference type="ChEBI" id="CHEBI:57856"/>
        <dbReference type="ChEBI" id="CHEBI:59789"/>
        <dbReference type="ChEBI" id="CHEBI:84166"/>
        <dbReference type="ChEBI" id="CHEBI:84167"/>
        <dbReference type="EC" id="2.1.1.201"/>
    </reaction>
</comment>
<comment type="pathway">
    <text evidence="1">Quinol/quinone metabolism; menaquinone biosynthesis; menaquinol from 1,4-dihydroxy-2-naphthoate: step 2/2.</text>
</comment>
<comment type="pathway">
    <text evidence="1">Cofactor biosynthesis; ubiquinone biosynthesis.</text>
</comment>
<comment type="similarity">
    <text evidence="1">Belongs to the class I-like SAM-binding methyltransferase superfamily. MenG/UbiE family.</text>
</comment>
<accession>B4SZ73</accession>
<sequence>MVEDSQETTHFGFQTVAKEQKADMVAHVFHSVASKYDVMNDLMSFGIHRLWKRFTIDCSGVRRGQTVLDLAGGTGDLTAKFSRMVGETGKVILADINDSMLKMGREKLRNIGVIGNVEYVQANAEALPFPDNTFDCITISFGLRNVTEKEKALRSMFRVLKPGGRLLVLEFSKPIIEPLSKAYDAYSFHILPRIGSMVANDADSYRYLAESIRMHPDQDTLKAMMQDAGFESVDYYNLTAGVVALHRGYKF</sequence>
<organism>
    <name type="scientific">Salmonella newport (strain SL254)</name>
    <dbReference type="NCBI Taxonomy" id="423368"/>
    <lineage>
        <taxon>Bacteria</taxon>
        <taxon>Pseudomonadati</taxon>
        <taxon>Pseudomonadota</taxon>
        <taxon>Gammaproteobacteria</taxon>
        <taxon>Enterobacterales</taxon>
        <taxon>Enterobacteriaceae</taxon>
        <taxon>Salmonella</taxon>
    </lineage>
</organism>
<reference key="1">
    <citation type="journal article" date="2011" name="J. Bacteriol.">
        <title>Comparative genomics of 28 Salmonella enterica isolates: evidence for CRISPR-mediated adaptive sublineage evolution.</title>
        <authorList>
            <person name="Fricke W.F."/>
            <person name="Mammel M.K."/>
            <person name="McDermott P.F."/>
            <person name="Tartera C."/>
            <person name="White D.G."/>
            <person name="Leclerc J.E."/>
            <person name="Ravel J."/>
            <person name="Cebula T.A."/>
        </authorList>
    </citation>
    <scope>NUCLEOTIDE SEQUENCE [LARGE SCALE GENOMIC DNA]</scope>
    <source>
        <strain>SL254</strain>
    </source>
</reference>
<dbReference type="EC" id="2.1.1.163" evidence="1"/>
<dbReference type="EC" id="2.1.1.201" evidence="1"/>
<dbReference type="EMBL" id="CP001113">
    <property type="protein sequence ID" value="ACF64040.1"/>
    <property type="molecule type" value="Genomic_DNA"/>
</dbReference>
<dbReference type="RefSeq" id="WP_000229009.1">
    <property type="nucleotide sequence ID" value="NZ_CCMR01000001.1"/>
</dbReference>
<dbReference type="SMR" id="B4SZ73"/>
<dbReference type="KEGG" id="see:SNSL254_A4250"/>
<dbReference type="HOGENOM" id="CLU_037990_0_0_6"/>
<dbReference type="UniPathway" id="UPA00079">
    <property type="reaction ID" value="UER00169"/>
</dbReference>
<dbReference type="UniPathway" id="UPA00232"/>
<dbReference type="Proteomes" id="UP000008824">
    <property type="component" value="Chromosome"/>
</dbReference>
<dbReference type="GO" id="GO:0008425">
    <property type="term" value="F:2-methoxy-6-polyprenyl-1,4-benzoquinol methyltransferase activity"/>
    <property type="evidence" value="ECO:0007669"/>
    <property type="project" value="UniProtKB-UniRule"/>
</dbReference>
<dbReference type="GO" id="GO:0043770">
    <property type="term" value="F:demethylmenaquinone methyltransferase activity"/>
    <property type="evidence" value="ECO:0007669"/>
    <property type="project" value="UniProtKB-UniRule"/>
</dbReference>
<dbReference type="GO" id="GO:0009060">
    <property type="term" value="P:aerobic respiration"/>
    <property type="evidence" value="ECO:0007669"/>
    <property type="project" value="UniProtKB-UniRule"/>
</dbReference>
<dbReference type="GO" id="GO:0009234">
    <property type="term" value="P:menaquinone biosynthetic process"/>
    <property type="evidence" value="ECO:0007669"/>
    <property type="project" value="UniProtKB-UniRule"/>
</dbReference>
<dbReference type="GO" id="GO:0032259">
    <property type="term" value="P:methylation"/>
    <property type="evidence" value="ECO:0007669"/>
    <property type="project" value="UniProtKB-KW"/>
</dbReference>
<dbReference type="CDD" id="cd02440">
    <property type="entry name" value="AdoMet_MTases"/>
    <property type="match status" value="1"/>
</dbReference>
<dbReference type="FunFam" id="3.40.50.150:FF:000014">
    <property type="entry name" value="Ubiquinone/menaquinone biosynthesis C-methyltransferase UbiE"/>
    <property type="match status" value="1"/>
</dbReference>
<dbReference type="Gene3D" id="3.40.50.150">
    <property type="entry name" value="Vaccinia Virus protein VP39"/>
    <property type="match status" value="1"/>
</dbReference>
<dbReference type="HAMAP" id="MF_01813">
    <property type="entry name" value="MenG_UbiE_methyltr"/>
    <property type="match status" value="1"/>
</dbReference>
<dbReference type="InterPro" id="IPR029063">
    <property type="entry name" value="SAM-dependent_MTases_sf"/>
</dbReference>
<dbReference type="InterPro" id="IPR004033">
    <property type="entry name" value="UbiE/COQ5_MeTrFase"/>
</dbReference>
<dbReference type="InterPro" id="IPR023576">
    <property type="entry name" value="UbiE/COQ5_MeTrFase_CS"/>
</dbReference>
<dbReference type="NCBIfam" id="TIGR01934">
    <property type="entry name" value="MenG_MenH_UbiE"/>
    <property type="match status" value="1"/>
</dbReference>
<dbReference type="NCBIfam" id="NF001240">
    <property type="entry name" value="PRK00216.1-1"/>
    <property type="match status" value="1"/>
</dbReference>
<dbReference type="NCBIfam" id="NF001242">
    <property type="entry name" value="PRK00216.1-3"/>
    <property type="match status" value="1"/>
</dbReference>
<dbReference type="NCBIfam" id="NF001244">
    <property type="entry name" value="PRK00216.1-5"/>
    <property type="match status" value="1"/>
</dbReference>
<dbReference type="PANTHER" id="PTHR43591:SF24">
    <property type="entry name" value="2-METHOXY-6-POLYPRENYL-1,4-BENZOQUINOL METHYLASE, MITOCHONDRIAL"/>
    <property type="match status" value="1"/>
</dbReference>
<dbReference type="PANTHER" id="PTHR43591">
    <property type="entry name" value="METHYLTRANSFERASE"/>
    <property type="match status" value="1"/>
</dbReference>
<dbReference type="Pfam" id="PF01209">
    <property type="entry name" value="Ubie_methyltran"/>
    <property type="match status" value="1"/>
</dbReference>
<dbReference type="SUPFAM" id="SSF53335">
    <property type="entry name" value="S-adenosyl-L-methionine-dependent methyltransferases"/>
    <property type="match status" value="1"/>
</dbReference>
<dbReference type="PROSITE" id="PS51608">
    <property type="entry name" value="SAM_MT_UBIE"/>
    <property type="match status" value="1"/>
</dbReference>
<dbReference type="PROSITE" id="PS01183">
    <property type="entry name" value="UBIE_1"/>
    <property type="match status" value="1"/>
</dbReference>
<dbReference type="PROSITE" id="PS01184">
    <property type="entry name" value="UBIE_2"/>
    <property type="match status" value="1"/>
</dbReference>
<proteinExistence type="inferred from homology"/>
<name>UBIE_SALNS</name>
<feature type="chain" id="PRO_1000187807" description="Ubiquinone/menaquinone biosynthesis C-methyltransferase UbiE">
    <location>
        <begin position="1"/>
        <end position="251"/>
    </location>
</feature>
<feature type="binding site" evidence="1">
    <location>
        <position position="74"/>
    </location>
    <ligand>
        <name>S-adenosyl-L-methionine</name>
        <dbReference type="ChEBI" id="CHEBI:59789"/>
    </ligand>
</feature>
<feature type="binding site" evidence="1">
    <location>
        <position position="95"/>
    </location>
    <ligand>
        <name>S-adenosyl-L-methionine</name>
        <dbReference type="ChEBI" id="CHEBI:59789"/>
    </ligand>
</feature>
<feature type="binding site" evidence="1">
    <location>
        <begin position="123"/>
        <end position="124"/>
    </location>
    <ligand>
        <name>S-adenosyl-L-methionine</name>
        <dbReference type="ChEBI" id="CHEBI:59789"/>
    </ligand>
</feature>
<feature type="binding site" evidence="1">
    <location>
        <position position="140"/>
    </location>
    <ligand>
        <name>S-adenosyl-L-methionine</name>
        <dbReference type="ChEBI" id="CHEBI:59789"/>
    </ligand>
</feature>
<evidence type="ECO:0000255" key="1">
    <source>
        <dbReference type="HAMAP-Rule" id="MF_01813"/>
    </source>
</evidence>